<proteinExistence type="inferred from homology"/>
<protein>
    <recommendedName>
        <fullName evidence="1">Large ribosomal subunit protein uL13</fullName>
    </recommendedName>
    <alternativeName>
        <fullName evidence="2">50S ribosomal protein L13</fullName>
    </alternativeName>
</protein>
<keyword id="KW-0687">Ribonucleoprotein</keyword>
<keyword id="KW-0689">Ribosomal protein</keyword>
<evidence type="ECO:0000255" key="1">
    <source>
        <dbReference type="HAMAP-Rule" id="MF_01366"/>
    </source>
</evidence>
<evidence type="ECO:0000305" key="2"/>
<name>RL13_ECOL5</name>
<sequence length="142" mass="16019">MKTFTAKPETVKRDWYVVDATGKTLGRLATELARRLRGKHKAEYTPHVDTGDYIIVLNADKVAVTGNKRTDKVYYHHTGHIGGIKQATFEEMIARRPERVIEIAVKGMLPKGPLGRAMFRKLKVYAGNEHNHAAQQPQVLDI</sequence>
<dbReference type="EMBL" id="CP000247">
    <property type="protein sequence ID" value="ABG71294.1"/>
    <property type="molecule type" value="Genomic_DNA"/>
</dbReference>
<dbReference type="RefSeq" id="WP_000847559.1">
    <property type="nucleotide sequence ID" value="NC_008253.1"/>
</dbReference>
<dbReference type="SMR" id="Q0TCN5"/>
<dbReference type="GeneID" id="89518067"/>
<dbReference type="KEGG" id="ecp:ECP_3314"/>
<dbReference type="HOGENOM" id="CLU_082184_2_2_6"/>
<dbReference type="Proteomes" id="UP000009182">
    <property type="component" value="Chromosome"/>
</dbReference>
<dbReference type="GO" id="GO:0022625">
    <property type="term" value="C:cytosolic large ribosomal subunit"/>
    <property type="evidence" value="ECO:0007669"/>
    <property type="project" value="TreeGrafter"/>
</dbReference>
<dbReference type="GO" id="GO:0003729">
    <property type="term" value="F:mRNA binding"/>
    <property type="evidence" value="ECO:0007669"/>
    <property type="project" value="TreeGrafter"/>
</dbReference>
<dbReference type="GO" id="GO:0003735">
    <property type="term" value="F:structural constituent of ribosome"/>
    <property type="evidence" value="ECO:0007669"/>
    <property type="project" value="InterPro"/>
</dbReference>
<dbReference type="GO" id="GO:0017148">
    <property type="term" value="P:negative regulation of translation"/>
    <property type="evidence" value="ECO:0007669"/>
    <property type="project" value="TreeGrafter"/>
</dbReference>
<dbReference type="GO" id="GO:0006412">
    <property type="term" value="P:translation"/>
    <property type="evidence" value="ECO:0007669"/>
    <property type="project" value="UniProtKB-UniRule"/>
</dbReference>
<dbReference type="CDD" id="cd00392">
    <property type="entry name" value="Ribosomal_L13"/>
    <property type="match status" value="1"/>
</dbReference>
<dbReference type="FunFam" id="3.90.1180.10:FF:000001">
    <property type="entry name" value="50S ribosomal protein L13"/>
    <property type="match status" value="1"/>
</dbReference>
<dbReference type="Gene3D" id="3.90.1180.10">
    <property type="entry name" value="Ribosomal protein L13"/>
    <property type="match status" value="1"/>
</dbReference>
<dbReference type="HAMAP" id="MF_01366">
    <property type="entry name" value="Ribosomal_uL13"/>
    <property type="match status" value="1"/>
</dbReference>
<dbReference type="InterPro" id="IPR005822">
    <property type="entry name" value="Ribosomal_uL13"/>
</dbReference>
<dbReference type="InterPro" id="IPR005823">
    <property type="entry name" value="Ribosomal_uL13_bac-type"/>
</dbReference>
<dbReference type="InterPro" id="IPR023563">
    <property type="entry name" value="Ribosomal_uL13_CS"/>
</dbReference>
<dbReference type="InterPro" id="IPR036899">
    <property type="entry name" value="Ribosomal_uL13_sf"/>
</dbReference>
<dbReference type="NCBIfam" id="TIGR01066">
    <property type="entry name" value="rplM_bact"/>
    <property type="match status" value="1"/>
</dbReference>
<dbReference type="PANTHER" id="PTHR11545:SF2">
    <property type="entry name" value="LARGE RIBOSOMAL SUBUNIT PROTEIN UL13M"/>
    <property type="match status" value="1"/>
</dbReference>
<dbReference type="PANTHER" id="PTHR11545">
    <property type="entry name" value="RIBOSOMAL PROTEIN L13"/>
    <property type="match status" value="1"/>
</dbReference>
<dbReference type="Pfam" id="PF00572">
    <property type="entry name" value="Ribosomal_L13"/>
    <property type="match status" value="1"/>
</dbReference>
<dbReference type="PIRSF" id="PIRSF002181">
    <property type="entry name" value="Ribosomal_L13"/>
    <property type="match status" value="1"/>
</dbReference>
<dbReference type="SUPFAM" id="SSF52161">
    <property type="entry name" value="Ribosomal protein L13"/>
    <property type="match status" value="1"/>
</dbReference>
<dbReference type="PROSITE" id="PS00783">
    <property type="entry name" value="RIBOSOMAL_L13"/>
    <property type="match status" value="1"/>
</dbReference>
<comment type="function">
    <text evidence="1">This protein is one of the early assembly proteins of the 50S ribosomal subunit, although it is not seen to bind rRNA by itself. It is important during the early stages of 50S assembly.</text>
</comment>
<comment type="subunit">
    <text evidence="1">Part of the 50S ribosomal subunit.</text>
</comment>
<comment type="similarity">
    <text evidence="1">Belongs to the universal ribosomal protein uL13 family.</text>
</comment>
<gene>
    <name evidence="1" type="primary">rplM</name>
    <name type="ordered locus">ECP_3314</name>
</gene>
<feature type="chain" id="PRO_0000261725" description="Large ribosomal subunit protein uL13">
    <location>
        <begin position="1"/>
        <end position="142"/>
    </location>
</feature>
<organism>
    <name type="scientific">Escherichia coli O6:K15:H31 (strain 536 / UPEC)</name>
    <dbReference type="NCBI Taxonomy" id="362663"/>
    <lineage>
        <taxon>Bacteria</taxon>
        <taxon>Pseudomonadati</taxon>
        <taxon>Pseudomonadota</taxon>
        <taxon>Gammaproteobacteria</taxon>
        <taxon>Enterobacterales</taxon>
        <taxon>Enterobacteriaceae</taxon>
        <taxon>Escherichia</taxon>
    </lineage>
</organism>
<reference key="1">
    <citation type="journal article" date="2006" name="Mol. Microbiol.">
        <title>Role of pathogenicity island-associated integrases in the genome plasticity of uropathogenic Escherichia coli strain 536.</title>
        <authorList>
            <person name="Hochhut B."/>
            <person name="Wilde C."/>
            <person name="Balling G."/>
            <person name="Middendorf B."/>
            <person name="Dobrindt U."/>
            <person name="Brzuszkiewicz E."/>
            <person name="Gottschalk G."/>
            <person name="Carniel E."/>
            <person name="Hacker J."/>
        </authorList>
    </citation>
    <scope>NUCLEOTIDE SEQUENCE [LARGE SCALE GENOMIC DNA]</scope>
    <source>
        <strain>536 / UPEC</strain>
    </source>
</reference>
<accession>Q0TCN5</accession>